<name>SUC3_ARATH</name>
<dbReference type="EMBL" id="AJ289165">
    <property type="protein sequence ID" value="CAB92307.1"/>
    <property type="molecule type" value="mRNA"/>
</dbReference>
<dbReference type="EMBL" id="AC004138">
    <property type="protein sequence ID" value="AAC32907.1"/>
    <property type="molecule type" value="Genomic_DNA"/>
</dbReference>
<dbReference type="EMBL" id="CP002685">
    <property type="protein sequence ID" value="AEC05635.1"/>
    <property type="molecule type" value="Genomic_DNA"/>
</dbReference>
<dbReference type="PIR" id="G84441">
    <property type="entry name" value="G84441"/>
</dbReference>
<dbReference type="RefSeq" id="NP_178389.1">
    <molecule id="O80605-1"/>
    <property type="nucleotide sequence ID" value="NM_126341.3"/>
</dbReference>
<dbReference type="SMR" id="O80605"/>
<dbReference type="BioGRID" id="219">
    <property type="interactions" value="20"/>
</dbReference>
<dbReference type="FunCoup" id="O80605">
    <property type="interactions" value="2515"/>
</dbReference>
<dbReference type="IntAct" id="O80605">
    <property type="interactions" value="17"/>
</dbReference>
<dbReference type="STRING" id="3702.O80605"/>
<dbReference type="TCDB" id="2.A.2.4.3">
    <property type="family name" value="the glycoside-pentoside-hexuronide (gph):cation symporter family"/>
</dbReference>
<dbReference type="GlyCosmos" id="O80605">
    <property type="glycosylation" value="1 site, No reported glycans"/>
</dbReference>
<dbReference type="GlyGen" id="O80605">
    <property type="glycosylation" value="1 site"/>
</dbReference>
<dbReference type="iPTMnet" id="O80605"/>
<dbReference type="PaxDb" id="3702-AT2G02860.1"/>
<dbReference type="ProteomicsDB" id="228278">
    <molecule id="O80605-1"/>
</dbReference>
<dbReference type="EnsemblPlants" id="AT2G02860.1">
    <molecule id="O80605-1"/>
    <property type="protein sequence ID" value="AT2G02860.1"/>
    <property type="gene ID" value="AT2G02860"/>
</dbReference>
<dbReference type="GeneID" id="814817"/>
<dbReference type="Gramene" id="AT2G02860.1">
    <molecule id="O80605-1"/>
    <property type="protein sequence ID" value="AT2G02860.1"/>
    <property type="gene ID" value="AT2G02860"/>
</dbReference>
<dbReference type="KEGG" id="ath:AT2G02860"/>
<dbReference type="Araport" id="AT2G02860"/>
<dbReference type="TAIR" id="AT2G02860">
    <property type="gene designation" value="SUT2"/>
</dbReference>
<dbReference type="eggNOG" id="KOG0637">
    <property type="taxonomic scope" value="Eukaryota"/>
</dbReference>
<dbReference type="HOGENOM" id="CLU_025234_1_0_1"/>
<dbReference type="InParanoid" id="O80605"/>
<dbReference type="OMA" id="SQAFAMF"/>
<dbReference type="PhylomeDB" id="O80605"/>
<dbReference type="SABIO-RK" id="O80605"/>
<dbReference type="UniPathway" id="UPA00238"/>
<dbReference type="PRO" id="PR:O80605"/>
<dbReference type="Proteomes" id="UP000006548">
    <property type="component" value="Chromosome 2"/>
</dbReference>
<dbReference type="ExpressionAtlas" id="O80605">
    <property type="expression patterns" value="baseline and differential"/>
</dbReference>
<dbReference type="GO" id="GO:0005794">
    <property type="term" value="C:Golgi apparatus"/>
    <property type="evidence" value="ECO:0007005"/>
    <property type="project" value="TAIR"/>
</dbReference>
<dbReference type="GO" id="GO:0005886">
    <property type="term" value="C:plasma membrane"/>
    <property type="evidence" value="ECO:0007669"/>
    <property type="project" value="UniProtKB-SubCell"/>
</dbReference>
<dbReference type="GO" id="GO:0090406">
    <property type="term" value="C:pollen tube"/>
    <property type="evidence" value="ECO:0000314"/>
    <property type="project" value="TAIR"/>
</dbReference>
<dbReference type="GO" id="GO:0008515">
    <property type="term" value="F:sucrose transmembrane transporter activity"/>
    <property type="evidence" value="ECO:0000314"/>
    <property type="project" value="TAIR"/>
</dbReference>
<dbReference type="GO" id="GO:0015293">
    <property type="term" value="F:symporter activity"/>
    <property type="evidence" value="ECO:0007669"/>
    <property type="project" value="UniProtKB-KW"/>
</dbReference>
<dbReference type="GO" id="GO:0009611">
    <property type="term" value="P:response to wounding"/>
    <property type="evidence" value="ECO:0000270"/>
    <property type="project" value="TAIR"/>
</dbReference>
<dbReference type="GO" id="GO:0005985">
    <property type="term" value="P:sucrose metabolic process"/>
    <property type="evidence" value="ECO:0007669"/>
    <property type="project" value="UniProtKB-UniPathway"/>
</dbReference>
<dbReference type="GO" id="GO:0015770">
    <property type="term" value="P:sucrose transport"/>
    <property type="evidence" value="ECO:0000304"/>
    <property type="project" value="TAIR"/>
</dbReference>
<dbReference type="CDD" id="cd17313">
    <property type="entry name" value="MFS_SLC45_SUC"/>
    <property type="match status" value="1"/>
</dbReference>
<dbReference type="FunFam" id="1.20.1250.20:FF:000366">
    <property type="entry name" value="Sucrose transport protein SUT5"/>
    <property type="match status" value="1"/>
</dbReference>
<dbReference type="FunFam" id="1.20.1250.20:FF:000182">
    <property type="entry name" value="Sucrose transporter SUC2"/>
    <property type="match status" value="1"/>
</dbReference>
<dbReference type="Gene3D" id="1.20.1250.20">
    <property type="entry name" value="MFS general substrate transporter like domains"/>
    <property type="match status" value="1"/>
</dbReference>
<dbReference type="InterPro" id="IPR011701">
    <property type="entry name" value="MFS"/>
</dbReference>
<dbReference type="InterPro" id="IPR036259">
    <property type="entry name" value="MFS_trans_sf"/>
</dbReference>
<dbReference type="PANTHER" id="PTHR19432:SF35">
    <property type="entry name" value="SOLUTE CARRIER FAMILY 45 MEMBER 3 ISOFORM X1"/>
    <property type="match status" value="1"/>
</dbReference>
<dbReference type="PANTHER" id="PTHR19432">
    <property type="entry name" value="SUGAR TRANSPORTER"/>
    <property type="match status" value="1"/>
</dbReference>
<dbReference type="Pfam" id="PF07690">
    <property type="entry name" value="MFS_1"/>
    <property type="match status" value="1"/>
</dbReference>
<dbReference type="SUPFAM" id="SSF103473">
    <property type="entry name" value="MFS general substrate transporter"/>
    <property type="match status" value="1"/>
</dbReference>
<gene>
    <name evidence="7" type="primary">SUC3</name>
    <name evidence="8" type="synonym">SUT2</name>
    <name evidence="10" type="ordered locus">At2g02860</name>
    <name evidence="11" type="ORF">T17M13.3</name>
</gene>
<protein>
    <recommendedName>
        <fullName evidence="7">Sucrose transport protein SUC3</fullName>
        <shortName evidence="7">AtSUC3</shortName>
    </recommendedName>
    <alternativeName>
        <fullName>Sucrose permease 3</fullName>
    </alternativeName>
    <alternativeName>
        <fullName evidence="8">Sucrose transporter 2</fullName>
    </alternativeName>
    <alternativeName>
        <fullName evidence="7">Sucrose-proton symporter 3</fullName>
    </alternativeName>
</protein>
<sequence>MSDSVSISVPYRNLRKEIELETVTKHRQNESGSSSFSESASPSNHSDSADGESVSKNCSLVTLVLSCTVAAGVQFGWALQLSLLTPYIQTLGISHAFSSFIWLCGPITGLVVQPFVGIWSDKCTSKYGRRRPFILVGSFMISIAVIIIGFSADIGYLLGDSKEHCSTFKGTRTRAAVVFIIGFWLLDLANNTVQGPARALLADLSGPDQRNTANAVFCLWMAIGNILGFSAGASGKWQEWFPFLTSRACCAACGNLKAAFLLAVVFLTICTLVTIYFAKEIPFTSNKPTRIQDSAPLLDDLQSKGLEHSKLNNGTANGIKYERVERDTDEQFGNSENEHQDETYVDGPGSVLVNLLTSLRHLPPAMHSVLIVMALTWLSWFPFFLFDTDWMGREVYHGDPTGDSLHMELYDQGVREGALGLLLNSVVLGISSFLIEPMCQRMGARVVWALSNFTVFACMAGTAVISLMSLSDDKNGIEYIMRGNETTRTAAVIVFALLGFPLAITYSVPFSVTAEVTADSGGGQGLAIGVLNLAIVIPQMIVSLGAGPWDQLFGGGNLPAFVLASVAAFAAGVIALQRLPTLSSSFKSTGFHIG</sequence>
<proteinExistence type="evidence at protein level"/>
<keyword id="KW-0007">Acetylation</keyword>
<keyword id="KW-0025">Alternative splicing</keyword>
<keyword id="KW-1003">Cell membrane</keyword>
<keyword id="KW-0325">Glycoprotein</keyword>
<keyword id="KW-0472">Membrane</keyword>
<keyword id="KW-1185">Reference proteome</keyword>
<keyword id="KW-0762">Sugar transport</keyword>
<keyword id="KW-0769">Symport</keyword>
<keyword id="KW-0812">Transmembrane</keyword>
<keyword id="KW-1133">Transmembrane helix</keyword>
<keyword id="KW-0813">Transport</keyword>
<feature type="initiator methionine" description="Removed" evidence="12">
    <location>
        <position position="1"/>
    </location>
</feature>
<feature type="chain" id="PRO_0000122524" description="Sucrose transport protein SUC3">
    <location>
        <begin position="2"/>
        <end position="594"/>
    </location>
</feature>
<feature type="topological domain" description="Cytoplasmic" evidence="1">
    <location>
        <begin position="2"/>
        <end position="58"/>
    </location>
</feature>
<feature type="transmembrane region" description="Helical" evidence="1">
    <location>
        <begin position="59"/>
        <end position="79"/>
    </location>
</feature>
<feature type="topological domain" description="Extracellular" evidence="1">
    <location>
        <begin position="80"/>
        <end position="98"/>
    </location>
</feature>
<feature type="transmembrane region" description="Helical" evidence="1">
    <location>
        <begin position="99"/>
        <end position="119"/>
    </location>
</feature>
<feature type="topological domain" description="Cytoplasmic" evidence="1">
    <location>
        <begin position="120"/>
        <end position="131"/>
    </location>
</feature>
<feature type="transmembrane region" description="Helical" evidence="1">
    <location>
        <begin position="132"/>
        <end position="152"/>
    </location>
</feature>
<feature type="topological domain" description="Extracellular" evidence="1">
    <location>
        <begin position="153"/>
        <end position="174"/>
    </location>
</feature>
<feature type="transmembrane region" description="Helical" evidence="1">
    <location>
        <begin position="175"/>
        <end position="195"/>
    </location>
</feature>
<feature type="topological domain" description="Cytoplasmic" evidence="1">
    <location>
        <begin position="196"/>
        <end position="214"/>
    </location>
</feature>
<feature type="transmembrane region" description="Helical" evidence="1">
    <location>
        <begin position="215"/>
        <end position="235"/>
    </location>
</feature>
<feature type="topological domain" description="Extracellular" evidence="1">
    <location>
        <begin position="236"/>
        <end position="257"/>
    </location>
</feature>
<feature type="transmembrane region" description="Helical" evidence="1">
    <location>
        <begin position="258"/>
        <end position="278"/>
    </location>
</feature>
<feature type="topological domain" description="Cytoplasmic" evidence="1">
    <location>
        <begin position="279"/>
        <end position="365"/>
    </location>
</feature>
<feature type="transmembrane region" description="Helical" evidence="1">
    <location>
        <begin position="366"/>
        <end position="386"/>
    </location>
</feature>
<feature type="topological domain" description="Extracellular" evidence="1">
    <location>
        <begin position="387"/>
        <end position="417"/>
    </location>
</feature>
<feature type="transmembrane region" description="Helical" evidence="1">
    <location>
        <begin position="418"/>
        <end position="438"/>
    </location>
</feature>
<feature type="topological domain" description="Cytoplasmic" evidence="1">
    <location>
        <begin position="439"/>
        <end position="445"/>
    </location>
</feature>
<feature type="transmembrane region" description="Helical" evidence="1">
    <location>
        <begin position="446"/>
        <end position="466"/>
    </location>
</feature>
<feature type="topological domain" description="Extracellular" evidence="1">
    <location>
        <begin position="467"/>
        <end position="489"/>
    </location>
</feature>
<feature type="transmembrane region" description="Helical" evidence="1">
    <location>
        <begin position="490"/>
        <end position="510"/>
    </location>
</feature>
<feature type="topological domain" description="Cytoplasmic" evidence="1">
    <location>
        <begin position="511"/>
        <end position="525"/>
    </location>
</feature>
<feature type="transmembrane region" description="Helical" evidence="1">
    <location>
        <begin position="526"/>
        <end position="546"/>
    </location>
</feature>
<feature type="topological domain" description="Extracellular" evidence="1">
    <location>
        <begin position="547"/>
        <end position="555"/>
    </location>
</feature>
<feature type="transmembrane region" description="Helical" evidence="1">
    <location>
        <begin position="556"/>
        <end position="576"/>
    </location>
</feature>
<feature type="topological domain" description="Cytoplasmic" evidence="1">
    <location>
        <begin position="577"/>
        <end position="594"/>
    </location>
</feature>
<feature type="region of interest" description="Disordered" evidence="2">
    <location>
        <begin position="23"/>
        <end position="50"/>
    </location>
</feature>
<feature type="compositionally biased region" description="Low complexity" evidence="2">
    <location>
        <begin position="31"/>
        <end position="46"/>
    </location>
</feature>
<feature type="modified residue" description="N-acetylserine" evidence="12">
    <location>
        <position position="2"/>
    </location>
</feature>
<feature type="glycosylation site" description="N-linked (GlcNAc...) asparagine" evidence="1">
    <location>
        <position position="484"/>
    </location>
</feature>
<evidence type="ECO:0000255" key="1"/>
<evidence type="ECO:0000256" key="2">
    <source>
        <dbReference type="SAM" id="MobiDB-lite"/>
    </source>
</evidence>
<evidence type="ECO:0000269" key="3">
    <source>
    </source>
</evidence>
<evidence type="ECO:0000269" key="4">
    <source>
    </source>
</evidence>
<evidence type="ECO:0000269" key="5">
    <source>
    </source>
</evidence>
<evidence type="ECO:0000269" key="6">
    <source>
    </source>
</evidence>
<evidence type="ECO:0000303" key="7">
    <source>
    </source>
</evidence>
<evidence type="ECO:0000303" key="8">
    <source>
    </source>
</evidence>
<evidence type="ECO:0000305" key="9"/>
<evidence type="ECO:0000312" key="10">
    <source>
        <dbReference type="Araport" id="AT2G02860"/>
    </source>
</evidence>
<evidence type="ECO:0000312" key="11">
    <source>
        <dbReference type="EMBL" id="AAC32907.1"/>
    </source>
</evidence>
<evidence type="ECO:0007744" key="12">
    <source>
    </source>
</evidence>
<organism>
    <name type="scientific">Arabidopsis thaliana</name>
    <name type="common">Mouse-ear cress</name>
    <dbReference type="NCBI Taxonomy" id="3702"/>
    <lineage>
        <taxon>Eukaryota</taxon>
        <taxon>Viridiplantae</taxon>
        <taxon>Streptophyta</taxon>
        <taxon>Embryophyta</taxon>
        <taxon>Tracheophyta</taxon>
        <taxon>Spermatophyta</taxon>
        <taxon>Magnoliopsida</taxon>
        <taxon>eudicotyledons</taxon>
        <taxon>Gunneridae</taxon>
        <taxon>Pentapetalae</taxon>
        <taxon>rosids</taxon>
        <taxon>malvids</taxon>
        <taxon>Brassicales</taxon>
        <taxon>Brassicaceae</taxon>
        <taxon>Camelineae</taxon>
        <taxon>Arabidopsis</taxon>
    </lineage>
</organism>
<reference key="1">
    <citation type="journal article" date="2000" name="Plant J.">
        <title>AtSUC3, a gene encoding a new Arabidopsis sucrose transporter, is expressed in cells adjacent to the vascular tissue and in a carpel cell layer.</title>
        <authorList>
            <person name="Meyer S."/>
            <person name="Melzer M."/>
            <person name="Truernit E."/>
            <person name="Huemmer C."/>
            <person name="Besenbeck R."/>
            <person name="Stadler R."/>
            <person name="Sauer N."/>
        </authorList>
    </citation>
    <scope>NUCLEOTIDE SEQUENCE [MRNA]</scope>
    <scope>FUNCTION</scope>
    <scope>TISSUE SPECIFICITY</scope>
    <scope>DEVELOPMENTAL STAGE</scope>
    <scope>ACTIVITY REGULATION</scope>
    <scope>BIOPHYSICOCHEMICAL PROPERTIES</scope>
    <scope>TRANSPORTER ACTIVITY</scope>
    <source>
        <tissue>Flower</tissue>
    </source>
</reference>
<reference key="2">
    <citation type="journal article" date="1999" name="Nature">
        <title>Sequence and analysis of chromosome 2 of the plant Arabidopsis thaliana.</title>
        <authorList>
            <person name="Lin X."/>
            <person name="Kaul S."/>
            <person name="Rounsley S.D."/>
            <person name="Shea T.P."/>
            <person name="Benito M.-I."/>
            <person name="Town C.D."/>
            <person name="Fujii C.Y."/>
            <person name="Mason T.M."/>
            <person name="Bowman C.L."/>
            <person name="Barnstead M.E."/>
            <person name="Feldblyum T.V."/>
            <person name="Buell C.R."/>
            <person name="Ketchum K.A."/>
            <person name="Lee J.J."/>
            <person name="Ronning C.M."/>
            <person name="Koo H.L."/>
            <person name="Moffat K.S."/>
            <person name="Cronin L.A."/>
            <person name="Shen M."/>
            <person name="Pai G."/>
            <person name="Van Aken S."/>
            <person name="Umayam L."/>
            <person name="Tallon L.J."/>
            <person name="Gill J.E."/>
            <person name="Adams M.D."/>
            <person name="Carrera A.J."/>
            <person name="Creasy T.H."/>
            <person name="Goodman H.M."/>
            <person name="Somerville C.R."/>
            <person name="Copenhaver G.P."/>
            <person name="Preuss D."/>
            <person name="Nierman W.C."/>
            <person name="White O."/>
            <person name="Eisen J.A."/>
            <person name="Salzberg S.L."/>
            <person name="Fraser C.M."/>
            <person name="Venter J.C."/>
        </authorList>
    </citation>
    <scope>NUCLEOTIDE SEQUENCE [LARGE SCALE GENOMIC DNA]</scope>
    <source>
        <strain>cv. Columbia</strain>
    </source>
</reference>
<reference key="3">
    <citation type="journal article" date="2017" name="Plant J.">
        <title>Araport11: a complete reannotation of the Arabidopsis thaliana reference genome.</title>
        <authorList>
            <person name="Cheng C.Y."/>
            <person name="Krishnakumar V."/>
            <person name="Chan A.P."/>
            <person name="Thibaud-Nissen F."/>
            <person name="Schobel S."/>
            <person name="Town C.D."/>
        </authorList>
    </citation>
    <scope>GENOME REANNOTATION</scope>
    <source>
        <strain>cv. Columbia</strain>
    </source>
</reference>
<reference key="4">
    <citation type="journal article" date="2000" name="Plant Cell">
        <title>SUT2, a putative sucrose sensor in sieve elements.</title>
        <authorList>
            <person name="Barker L."/>
            <person name="Kuehn C."/>
            <person name="Weise A."/>
            <person name="Schulz A."/>
            <person name="Gebhardt C."/>
            <person name="Hirner B."/>
            <person name="Hellmann H."/>
            <person name="Schulze W."/>
            <person name="Ward J.M."/>
            <person name="Frommer W.B."/>
        </authorList>
    </citation>
    <scope>TISSUE SPECIFICITY</scope>
</reference>
<reference key="5">
    <citation type="journal article" date="2003" name="BMC Biochem.">
        <title>Interactions between co-expressed Arabidopsis sucrose transporters in the split-ubiquitin system.</title>
        <authorList>
            <person name="Schulze W.X."/>
            <person name="Reinders A."/>
            <person name="Ward J."/>
            <person name="Lalonde S."/>
            <person name="Frommer W.B."/>
        </authorList>
    </citation>
    <scope>TISSUE SPECIFICITY</scope>
    <scope>HOMODIMERIZATION</scope>
    <scope>INTERACTION WITH SUC2 AND SUC4</scope>
</reference>
<reference key="6">
    <citation type="journal article" date="2004" name="Plant Physiol.">
        <title>Wounding enhances expression of AtSUC3, a sucrose transporter from Arabidopsis sieve elements and sink tissues.</title>
        <authorList>
            <person name="Meyer S."/>
            <person name="Lauterbach C."/>
            <person name="Niedermeier M."/>
            <person name="Barth I."/>
            <person name="Sjolund R.D."/>
            <person name="Sauer N."/>
        </authorList>
    </citation>
    <scope>TISSUE SPECIFICITY</scope>
    <scope>DEVELOPMENTAL STAGE</scope>
    <scope>INDUCTION</scope>
</reference>
<reference key="7">
    <citation type="journal article" date="2012" name="Mol. Cell. Proteomics">
        <title>Comparative large-scale characterisation of plant vs. mammal proteins reveals similar and idiosyncratic N-alpha acetylation features.</title>
        <authorList>
            <person name="Bienvenut W.V."/>
            <person name="Sumpton D."/>
            <person name="Martinez A."/>
            <person name="Lilla S."/>
            <person name="Espagne C."/>
            <person name="Meinnel T."/>
            <person name="Giglione C."/>
        </authorList>
    </citation>
    <scope>ACETYLATION [LARGE SCALE ANALYSIS] AT SER-2</scope>
    <scope>CLEAVAGE OF INITIATOR METHIONINE [LARGE SCALE ANALYSIS]</scope>
    <scope>IDENTIFICATION BY MASS SPECTROMETRY [LARGE SCALE ANALYSIS]</scope>
</reference>
<comment type="function">
    <text evidence="4">Responsible for the transport of sucrose into the cell, with the concomitant uptake of protons (symport system). Can also transport maltose at a lesser rate. May also transport biotin. Probably involved in carpel maturation that leads to pod shatter and seed dispersal.</text>
</comment>
<comment type="catalytic activity">
    <reaction evidence="4">
        <text>sucrose(out) + H(+)(out) = sucrose(in) + H(+)(in)</text>
        <dbReference type="Rhea" id="RHEA:72187"/>
        <dbReference type="ChEBI" id="CHEBI:15378"/>
        <dbReference type="ChEBI" id="CHEBI:17992"/>
    </reaction>
    <physiologicalReaction direction="left-to-right" evidence="4">
        <dbReference type="Rhea" id="RHEA:72188"/>
    </physiologicalReaction>
</comment>
<comment type="activity regulation">
    <text evidence="4">Inhibited by protonophores (e.g. dinitrophenol and carbonyl cyanide m-chlorophenyl-hydrazone (CCCP)) and SH group inhibitors (e.g. p-chloromercuribenzene sulphonic acid (PCMBS)).</text>
</comment>
<comment type="biophysicochemical properties">
    <kinetics>
        <KM evidence="4">1.9 mM for sucrose</KM>
        <KM evidence="4">1.6 mM for maltose</KM>
    </kinetics>
</comment>
<comment type="pathway">
    <text>Glycan biosynthesis; sucrose metabolism.</text>
</comment>
<comment type="subunit">
    <text evidence="5">Homodimer. Interacts with SUC2 and SUC4.</text>
</comment>
<comment type="subcellular location">
    <subcellularLocation>
        <location evidence="9">Cell membrane</location>
        <topology evidence="9">Multi-pass membrane protein</topology>
    </subcellularLocation>
</comment>
<comment type="alternative products">
    <event type="alternative splicing"/>
    <isoform>
        <id>O80605-1</id>
        <name>1</name>
        <sequence type="displayed"/>
    </isoform>
    <text>A number of isoforms are produced. According to EST sequences.</text>
</comment>
<comment type="tissue specificity">
    <text evidence="3 4 5 6">Mostly localized in parenchymatic cells next to vascular tissues (at protein level). Present in stipules, trichomes, hydathodes and guard cells of source leaves, as well as in lateral root tips and flowers.</text>
</comment>
<comment type="developmental stage">
    <text evidence="4 6">Expressed in pollen and pollen tubes, as well as in seed coats. Specific increase of expression in innermost layer cells of the mesocarp (cells located between the outer epidermis (exocarp) and the inner epidermis (endocarp) of the carpel) during carpel maturation (at protein level). Present in suspensor of embryos and in embryos root tips. Absent in very young organs, but levels increase as they mature.</text>
</comment>
<comment type="induction">
    <text evidence="6">By wounding.</text>
</comment>
<comment type="similarity">
    <text evidence="9">Belongs to the glycoside-pentoside-hexuronide (GPH) cation symporter transporter (TC 2.A.2.4) family.</text>
</comment>
<accession>O80605</accession>